<reference key="1">
    <citation type="journal article" date="2011" name="PLoS Genet.">
        <title>Genomic analysis of the necrotrophic fungal pathogens Sclerotinia sclerotiorum and Botrytis cinerea.</title>
        <authorList>
            <person name="Amselem J."/>
            <person name="Cuomo C.A."/>
            <person name="van Kan J.A.L."/>
            <person name="Viaud M."/>
            <person name="Benito E.P."/>
            <person name="Couloux A."/>
            <person name="Coutinho P.M."/>
            <person name="de Vries R.P."/>
            <person name="Dyer P.S."/>
            <person name="Fillinger S."/>
            <person name="Fournier E."/>
            <person name="Gout L."/>
            <person name="Hahn M."/>
            <person name="Kohn L."/>
            <person name="Lapalu N."/>
            <person name="Plummer K.M."/>
            <person name="Pradier J.-M."/>
            <person name="Quevillon E."/>
            <person name="Sharon A."/>
            <person name="Simon A."/>
            <person name="ten Have A."/>
            <person name="Tudzynski B."/>
            <person name="Tudzynski P."/>
            <person name="Wincker P."/>
            <person name="Andrew M."/>
            <person name="Anthouard V."/>
            <person name="Beever R.E."/>
            <person name="Beffa R."/>
            <person name="Benoit I."/>
            <person name="Bouzid O."/>
            <person name="Brault B."/>
            <person name="Chen Z."/>
            <person name="Choquer M."/>
            <person name="Collemare J."/>
            <person name="Cotton P."/>
            <person name="Danchin E.G."/>
            <person name="Da Silva C."/>
            <person name="Gautier A."/>
            <person name="Giraud C."/>
            <person name="Giraud T."/>
            <person name="Gonzalez C."/>
            <person name="Grossetete S."/>
            <person name="Gueldener U."/>
            <person name="Henrissat B."/>
            <person name="Howlett B.J."/>
            <person name="Kodira C."/>
            <person name="Kretschmer M."/>
            <person name="Lappartient A."/>
            <person name="Leroch M."/>
            <person name="Levis C."/>
            <person name="Mauceli E."/>
            <person name="Neuveglise C."/>
            <person name="Oeser B."/>
            <person name="Pearson M."/>
            <person name="Poulain J."/>
            <person name="Poussereau N."/>
            <person name="Quesneville H."/>
            <person name="Rascle C."/>
            <person name="Schumacher J."/>
            <person name="Segurens B."/>
            <person name="Sexton A."/>
            <person name="Silva E."/>
            <person name="Sirven C."/>
            <person name="Soanes D.M."/>
            <person name="Talbot N.J."/>
            <person name="Templeton M."/>
            <person name="Yandava C."/>
            <person name="Yarden O."/>
            <person name="Zeng Q."/>
            <person name="Rollins J.A."/>
            <person name="Lebrun M.-H."/>
            <person name="Dickman M."/>
        </authorList>
    </citation>
    <scope>NUCLEOTIDE SEQUENCE [LARGE SCALE GENOMIC DNA]</scope>
    <source>
        <strain>B05.10</strain>
    </source>
</reference>
<reference key="2">
    <citation type="journal article" date="2012" name="Eukaryot. Cell">
        <title>Genome update of Botrytis cinerea strains B05.10 and T4.</title>
        <authorList>
            <person name="Staats M."/>
            <person name="van Kan J.A.L."/>
        </authorList>
    </citation>
    <scope>NUCLEOTIDE SEQUENCE [LARGE SCALE GENOMIC DNA]</scope>
    <scope>GENOME REANNOTATION</scope>
    <source>
        <strain>B05.10</strain>
    </source>
</reference>
<reference key="3">
    <citation type="journal article" date="2017" name="Mol. Plant Pathol.">
        <title>A gapless genome sequence of the fungus Botrytis cinerea.</title>
        <authorList>
            <person name="van Kan J.A.L."/>
            <person name="Stassen J.H.M."/>
            <person name="Mosbach A."/>
            <person name="van der Lee T.A.J."/>
            <person name="Faino L."/>
            <person name="Farmer A.D."/>
            <person name="Papasotiriou D.G."/>
            <person name="Zhou S."/>
            <person name="Seidl M.F."/>
            <person name="Cottam E."/>
            <person name="Edel D."/>
            <person name="Hahn M."/>
            <person name="Schwartz D.C."/>
            <person name="Dietrich R.A."/>
            <person name="Widdison S."/>
            <person name="Scalliet G."/>
        </authorList>
    </citation>
    <scope>NUCLEOTIDE SEQUENCE [LARGE SCALE GENOMIC DNA]</scope>
    <scope>GENOME REANNOTATION</scope>
    <source>
        <strain>B05.10</strain>
    </source>
</reference>
<dbReference type="EMBL" id="CP009809">
    <property type="protein sequence ID" value="ATZ50205.1"/>
    <property type="molecule type" value="Genomic_DNA"/>
</dbReference>
<dbReference type="SMR" id="A6RMY5"/>
<dbReference type="EnsemblFungi" id="Bcin05g05790.1">
    <property type="protein sequence ID" value="Bcin05p05790.1"/>
    <property type="gene ID" value="Bcin05g05790"/>
</dbReference>
<dbReference type="GeneID" id="5440281"/>
<dbReference type="KEGG" id="bfu:BCIN_05g05790"/>
<dbReference type="VEuPathDB" id="FungiDB:Bcin05g05790"/>
<dbReference type="OMA" id="MGMRSNW"/>
<dbReference type="OrthoDB" id="6780543at2759"/>
<dbReference type="Proteomes" id="UP000001798">
    <property type="component" value="Chromosome bcin05"/>
</dbReference>
<dbReference type="GO" id="GO:0031428">
    <property type="term" value="C:box C/D methylation guide snoRNP complex"/>
    <property type="evidence" value="ECO:0007669"/>
    <property type="project" value="EnsemblFungi"/>
</dbReference>
<dbReference type="GO" id="GO:0005730">
    <property type="term" value="C:nucleolus"/>
    <property type="evidence" value="ECO:0007669"/>
    <property type="project" value="UniProtKB-SubCell"/>
</dbReference>
<dbReference type="GO" id="GO:0032040">
    <property type="term" value="C:small-subunit processome"/>
    <property type="evidence" value="ECO:0007669"/>
    <property type="project" value="EnsemblFungi"/>
</dbReference>
<dbReference type="GO" id="GO:0030515">
    <property type="term" value="F:snoRNA binding"/>
    <property type="evidence" value="ECO:0007669"/>
    <property type="project" value="InterPro"/>
</dbReference>
<dbReference type="GO" id="GO:0017069">
    <property type="term" value="F:snRNA binding"/>
    <property type="evidence" value="ECO:0007669"/>
    <property type="project" value="EnsemblFungi"/>
</dbReference>
<dbReference type="GO" id="GO:0000494">
    <property type="term" value="P:box C/D sno(s)RNA 3'-end processing"/>
    <property type="evidence" value="ECO:0007669"/>
    <property type="project" value="EnsemblFungi"/>
</dbReference>
<dbReference type="GO" id="GO:0000480">
    <property type="term" value="P:endonucleolytic cleavage in 5'-ETS of tricistronic rRNA transcript (SSU-rRNA, 5.8S rRNA, LSU-rRNA)"/>
    <property type="evidence" value="ECO:0007669"/>
    <property type="project" value="EnsemblFungi"/>
</dbReference>
<dbReference type="GO" id="GO:0000447">
    <property type="term" value="P:endonucleolytic cleavage in ITS1 to separate SSU-rRNA from 5.8S rRNA and LSU-rRNA from tricistronic rRNA transcript (SSU-rRNA, 5.8S rRNA, LSU-rRNA)"/>
    <property type="evidence" value="ECO:0007669"/>
    <property type="project" value="EnsemblFungi"/>
</dbReference>
<dbReference type="GO" id="GO:0000472">
    <property type="term" value="P:endonucleolytic cleavage to generate mature 5'-end of SSU-rRNA from (SSU-rRNA, 5.8S rRNA, LSU-rRNA)"/>
    <property type="evidence" value="ECO:0007669"/>
    <property type="project" value="EnsemblFungi"/>
</dbReference>
<dbReference type="GO" id="GO:1902570">
    <property type="term" value="P:protein localization to nucleolus"/>
    <property type="evidence" value="ECO:0007669"/>
    <property type="project" value="EnsemblFungi"/>
</dbReference>
<dbReference type="GO" id="GO:0000452">
    <property type="term" value="P:snoRNA guided rRNA 2'-O-methylation"/>
    <property type="evidence" value="ECO:0007669"/>
    <property type="project" value="EnsemblFungi"/>
</dbReference>
<dbReference type="FunFam" id="1.10.246.90:FF:000003">
    <property type="entry name" value="Nucleolar protein 58"/>
    <property type="match status" value="1"/>
</dbReference>
<dbReference type="FunFam" id="1.10.287.4070:FF:000001">
    <property type="entry name" value="Probable Nucleolar protein 58"/>
    <property type="match status" value="1"/>
</dbReference>
<dbReference type="Gene3D" id="1.10.287.4070">
    <property type="match status" value="1"/>
</dbReference>
<dbReference type="Gene3D" id="1.10.246.90">
    <property type="entry name" value="Nop domain"/>
    <property type="match status" value="1"/>
</dbReference>
<dbReference type="InterPro" id="IPR045056">
    <property type="entry name" value="Nop56/Nop58"/>
</dbReference>
<dbReference type="InterPro" id="IPR012974">
    <property type="entry name" value="NOP58/56_N"/>
</dbReference>
<dbReference type="InterPro" id="IPR042239">
    <property type="entry name" value="Nop_C"/>
</dbReference>
<dbReference type="InterPro" id="IPR002687">
    <property type="entry name" value="Nop_dom"/>
</dbReference>
<dbReference type="InterPro" id="IPR036070">
    <property type="entry name" value="Nop_dom_sf"/>
</dbReference>
<dbReference type="InterPro" id="IPR012976">
    <property type="entry name" value="NOSIC"/>
</dbReference>
<dbReference type="PANTHER" id="PTHR10894">
    <property type="entry name" value="NUCLEOLAR PROTEIN 5 NUCLEOLAR PROTEIN NOP5 NOP58"/>
    <property type="match status" value="1"/>
</dbReference>
<dbReference type="PANTHER" id="PTHR10894:SF1">
    <property type="entry name" value="NUCLEOLAR PROTEIN 58"/>
    <property type="match status" value="1"/>
</dbReference>
<dbReference type="Pfam" id="PF01798">
    <property type="entry name" value="Nop"/>
    <property type="match status" value="1"/>
</dbReference>
<dbReference type="Pfam" id="PF08156">
    <property type="entry name" value="NOP5NT"/>
    <property type="match status" value="1"/>
</dbReference>
<dbReference type="SMART" id="SM00931">
    <property type="entry name" value="NOSIC"/>
    <property type="match status" value="1"/>
</dbReference>
<dbReference type="SUPFAM" id="SSF89124">
    <property type="entry name" value="Nop domain"/>
    <property type="match status" value="1"/>
</dbReference>
<dbReference type="PROSITE" id="PS51358">
    <property type="entry name" value="NOP"/>
    <property type="match status" value="1"/>
</dbReference>
<evidence type="ECO:0000250" key="1"/>
<evidence type="ECO:0000255" key="2">
    <source>
        <dbReference type="PROSITE-ProRule" id="PRU00690"/>
    </source>
</evidence>
<evidence type="ECO:0000256" key="3">
    <source>
        <dbReference type="SAM" id="MobiDB-lite"/>
    </source>
</evidence>
<evidence type="ECO:0000305" key="4"/>
<proteinExistence type="inferred from homology"/>
<keyword id="KW-0539">Nucleus</keyword>
<keyword id="KW-1185">Reference proteome</keyword>
<keyword id="KW-0687">Ribonucleoprotein</keyword>
<keyword id="KW-0690">Ribosome biogenesis</keyword>
<keyword id="KW-0698">rRNA processing</keyword>
<sequence>MAPLFILTETAAGLVLFKADKKLLKKDDVASEIETAEGINGLLKLKQFQKFDSAATALEEVASLVEGKVSPMLASLLDTLKDEKKASLAVADPKLGQAINKLPGLTLTPISDSKTNDIFRGIRDHLPSLIPGLLPEHISTMSLGLSHSLSRHKLKFSPDKVDTMIVQAISLLDDLDKELNTYAMRVKEWYGWHFPEMGKIVNDNLAYARVILKVGMRVNTSSTDLADILPEEIETAIKAAAEVSMGTEITQEDLDNIKLLAEQVVGFTEYRQQLSSYLSARMQAIAPNLTELVGDLVGARLIAHAGSLMNLAKSPASTIQILGAEKALFRALKTKHDTPKYGLIYHASLVGQATGKNKGKIARMLAAKAAIGLRVDALSDWSAQGEGKGDDVDDEERSALGVTSRAKIERHLRGLEGKPLLPRGVAVGPNGKATSAPGKWEVKEARKYNADADGLAGDEPAAAVPIREKKNKKLIEEVAEESGSDSSDDSDASEKKPKKGDKEAKKAEKAAKKAEKAAKKAAKEAKKAAKAEKEAKKSDAPEVNGSKKRKSEDDGEKSEKKKKKKSKD</sequence>
<gene>
    <name type="primary">nop58</name>
    <name type="ORF">BC1G_01807</name>
    <name type="ORF">BCIN_05g05790</name>
</gene>
<accession>A6RMY5</accession>
<accession>A0A384JHY8</accession>
<feature type="chain" id="PRO_0000350978" description="Nucleolar protein 58">
    <location>
        <begin position="1"/>
        <end position="568"/>
    </location>
</feature>
<feature type="domain" description="Nop" evidence="2">
    <location>
        <begin position="285"/>
        <end position="417"/>
    </location>
</feature>
<feature type="region of interest" description="Disordered" evidence="3">
    <location>
        <begin position="451"/>
        <end position="568"/>
    </location>
</feature>
<feature type="compositionally biased region" description="Acidic residues" evidence="3">
    <location>
        <begin position="477"/>
        <end position="491"/>
    </location>
</feature>
<feature type="compositionally biased region" description="Basic and acidic residues" evidence="3">
    <location>
        <begin position="492"/>
        <end position="540"/>
    </location>
</feature>
<name>NOP58_BOTFB</name>
<protein>
    <recommendedName>
        <fullName>Nucleolar protein 58</fullName>
    </recommendedName>
</protein>
<organism>
    <name type="scientific">Botryotinia fuckeliana (strain B05.10)</name>
    <name type="common">Noble rot fungus</name>
    <name type="synonym">Botrytis cinerea</name>
    <dbReference type="NCBI Taxonomy" id="332648"/>
    <lineage>
        <taxon>Eukaryota</taxon>
        <taxon>Fungi</taxon>
        <taxon>Dikarya</taxon>
        <taxon>Ascomycota</taxon>
        <taxon>Pezizomycotina</taxon>
        <taxon>Leotiomycetes</taxon>
        <taxon>Helotiales</taxon>
        <taxon>Sclerotiniaceae</taxon>
        <taxon>Botrytis</taxon>
    </lineage>
</organism>
<comment type="function">
    <text evidence="1">Required for pre-18S rRNA processing. May bind microtubules (By similarity).</text>
</comment>
<comment type="subcellular location">
    <subcellularLocation>
        <location evidence="1">Nucleus</location>
        <location evidence="1">Nucleolus</location>
    </subcellularLocation>
</comment>
<comment type="similarity">
    <text evidence="4">Belongs to the NOP5/NOP56 family.</text>
</comment>